<protein>
    <recommendedName>
        <fullName evidence="1">Small ribosomal subunit protein uS19</fullName>
    </recommendedName>
    <alternativeName>
        <fullName evidence="2">30S ribosomal protein S19</fullName>
    </alternativeName>
</protein>
<gene>
    <name evidence="1" type="primary">rpsS</name>
    <name type="ordered locus">UUR10_0230</name>
</gene>
<name>RS19_UREU1</name>
<dbReference type="EMBL" id="CP001184">
    <property type="protein sequence ID" value="ACI59862.1"/>
    <property type="molecule type" value="Genomic_DNA"/>
</dbReference>
<dbReference type="RefSeq" id="WP_004025915.1">
    <property type="nucleotide sequence ID" value="NC_011374.1"/>
</dbReference>
<dbReference type="SMR" id="B5ZB44"/>
<dbReference type="STRING" id="565575.UUR10_0230"/>
<dbReference type="GeneID" id="93848710"/>
<dbReference type="KEGG" id="uue:UUR10_0230"/>
<dbReference type="eggNOG" id="COG0185">
    <property type="taxonomic scope" value="Bacteria"/>
</dbReference>
<dbReference type="HOGENOM" id="CLU_144911_0_1_14"/>
<dbReference type="OrthoDB" id="9797833at2"/>
<dbReference type="Proteomes" id="UP000002018">
    <property type="component" value="Chromosome"/>
</dbReference>
<dbReference type="GO" id="GO:0005737">
    <property type="term" value="C:cytoplasm"/>
    <property type="evidence" value="ECO:0007669"/>
    <property type="project" value="UniProtKB-ARBA"/>
</dbReference>
<dbReference type="GO" id="GO:0015935">
    <property type="term" value="C:small ribosomal subunit"/>
    <property type="evidence" value="ECO:0007669"/>
    <property type="project" value="InterPro"/>
</dbReference>
<dbReference type="GO" id="GO:0019843">
    <property type="term" value="F:rRNA binding"/>
    <property type="evidence" value="ECO:0007669"/>
    <property type="project" value="UniProtKB-UniRule"/>
</dbReference>
<dbReference type="GO" id="GO:0003735">
    <property type="term" value="F:structural constituent of ribosome"/>
    <property type="evidence" value="ECO:0007669"/>
    <property type="project" value="InterPro"/>
</dbReference>
<dbReference type="GO" id="GO:0000028">
    <property type="term" value="P:ribosomal small subunit assembly"/>
    <property type="evidence" value="ECO:0007669"/>
    <property type="project" value="TreeGrafter"/>
</dbReference>
<dbReference type="GO" id="GO:0006412">
    <property type="term" value="P:translation"/>
    <property type="evidence" value="ECO:0007669"/>
    <property type="project" value="UniProtKB-UniRule"/>
</dbReference>
<dbReference type="FunFam" id="3.30.860.10:FF:000001">
    <property type="entry name" value="30S ribosomal protein S19"/>
    <property type="match status" value="1"/>
</dbReference>
<dbReference type="Gene3D" id="3.30.860.10">
    <property type="entry name" value="30s Ribosomal Protein S19, Chain A"/>
    <property type="match status" value="1"/>
</dbReference>
<dbReference type="HAMAP" id="MF_00531">
    <property type="entry name" value="Ribosomal_uS19"/>
    <property type="match status" value="1"/>
</dbReference>
<dbReference type="InterPro" id="IPR002222">
    <property type="entry name" value="Ribosomal_uS19"/>
</dbReference>
<dbReference type="InterPro" id="IPR005732">
    <property type="entry name" value="Ribosomal_uS19_bac-type"/>
</dbReference>
<dbReference type="InterPro" id="IPR020934">
    <property type="entry name" value="Ribosomal_uS19_CS"/>
</dbReference>
<dbReference type="InterPro" id="IPR023575">
    <property type="entry name" value="Ribosomal_uS19_SF"/>
</dbReference>
<dbReference type="NCBIfam" id="TIGR01050">
    <property type="entry name" value="rpsS_bact"/>
    <property type="match status" value="1"/>
</dbReference>
<dbReference type="PANTHER" id="PTHR11880">
    <property type="entry name" value="RIBOSOMAL PROTEIN S19P FAMILY MEMBER"/>
    <property type="match status" value="1"/>
</dbReference>
<dbReference type="PANTHER" id="PTHR11880:SF8">
    <property type="entry name" value="SMALL RIBOSOMAL SUBUNIT PROTEIN US19M"/>
    <property type="match status" value="1"/>
</dbReference>
<dbReference type="Pfam" id="PF00203">
    <property type="entry name" value="Ribosomal_S19"/>
    <property type="match status" value="1"/>
</dbReference>
<dbReference type="PIRSF" id="PIRSF002144">
    <property type="entry name" value="Ribosomal_S19"/>
    <property type="match status" value="1"/>
</dbReference>
<dbReference type="PRINTS" id="PR00975">
    <property type="entry name" value="RIBOSOMALS19"/>
</dbReference>
<dbReference type="SUPFAM" id="SSF54570">
    <property type="entry name" value="Ribosomal protein S19"/>
    <property type="match status" value="1"/>
</dbReference>
<dbReference type="PROSITE" id="PS00323">
    <property type="entry name" value="RIBOSOMAL_S19"/>
    <property type="match status" value="1"/>
</dbReference>
<accession>B5ZB44</accession>
<feature type="chain" id="PRO_1000128055" description="Small ribosomal subunit protein uS19">
    <location>
        <begin position="1"/>
        <end position="88"/>
    </location>
</feature>
<sequence>MSRSLKKGAYADPSLLKKVEAANASVSKKPIKTWSRRSQIFPNFVGLTFEVHNGKTFLKVYVTEDMIGHKLGEFAPTRNFKNHTEAKR</sequence>
<organism>
    <name type="scientific">Ureaplasma urealyticum serovar 10 (strain ATCC 33699 / Western)</name>
    <dbReference type="NCBI Taxonomy" id="565575"/>
    <lineage>
        <taxon>Bacteria</taxon>
        <taxon>Bacillati</taxon>
        <taxon>Mycoplasmatota</taxon>
        <taxon>Mycoplasmoidales</taxon>
        <taxon>Mycoplasmoidaceae</taxon>
        <taxon>Ureaplasma</taxon>
    </lineage>
</organism>
<comment type="function">
    <text evidence="1">Protein S19 forms a complex with S13 that binds strongly to the 16S ribosomal RNA.</text>
</comment>
<comment type="similarity">
    <text evidence="1">Belongs to the universal ribosomal protein uS19 family.</text>
</comment>
<keyword id="KW-0687">Ribonucleoprotein</keyword>
<keyword id="KW-0689">Ribosomal protein</keyword>
<keyword id="KW-0694">RNA-binding</keyword>
<keyword id="KW-0699">rRNA-binding</keyword>
<reference key="1">
    <citation type="submission" date="2008-10" db="EMBL/GenBank/DDBJ databases">
        <title>Genome sequence of Ureaplasma urealyticum serovar 10 ATCC-33699.</title>
        <authorList>
            <person name="Shrivastava S."/>
            <person name="Methe B.A."/>
            <person name="Glass J."/>
            <person name="White K."/>
            <person name="Duffy L.B."/>
        </authorList>
    </citation>
    <scope>NUCLEOTIDE SEQUENCE [LARGE SCALE GENOMIC DNA]</scope>
    <source>
        <strain>ATCC 33699 / Western</strain>
    </source>
</reference>
<proteinExistence type="inferred from homology"/>
<evidence type="ECO:0000255" key="1">
    <source>
        <dbReference type="HAMAP-Rule" id="MF_00531"/>
    </source>
</evidence>
<evidence type="ECO:0000305" key="2"/>